<reference key="1">
    <citation type="journal article" date="2005" name="Science">
        <title>The transcriptional landscape of the mammalian genome.</title>
        <authorList>
            <person name="Carninci P."/>
            <person name="Kasukawa T."/>
            <person name="Katayama S."/>
            <person name="Gough J."/>
            <person name="Frith M.C."/>
            <person name="Maeda N."/>
            <person name="Oyama R."/>
            <person name="Ravasi T."/>
            <person name="Lenhard B."/>
            <person name="Wells C."/>
            <person name="Kodzius R."/>
            <person name="Shimokawa K."/>
            <person name="Bajic V.B."/>
            <person name="Brenner S.E."/>
            <person name="Batalov S."/>
            <person name="Forrest A.R."/>
            <person name="Zavolan M."/>
            <person name="Davis M.J."/>
            <person name="Wilming L.G."/>
            <person name="Aidinis V."/>
            <person name="Allen J.E."/>
            <person name="Ambesi-Impiombato A."/>
            <person name="Apweiler R."/>
            <person name="Aturaliya R.N."/>
            <person name="Bailey T.L."/>
            <person name="Bansal M."/>
            <person name="Baxter L."/>
            <person name="Beisel K.W."/>
            <person name="Bersano T."/>
            <person name="Bono H."/>
            <person name="Chalk A.M."/>
            <person name="Chiu K.P."/>
            <person name="Choudhary V."/>
            <person name="Christoffels A."/>
            <person name="Clutterbuck D.R."/>
            <person name="Crowe M.L."/>
            <person name="Dalla E."/>
            <person name="Dalrymple B.P."/>
            <person name="de Bono B."/>
            <person name="Della Gatta G."/>
            <person name="di Bernardo D."/>
            <person name="Down T."/>
            <person name="Engstrom P."/>
            <person name="Fagiolini M."/>
            <person name="Faulkner G."/>
            <person name="Fletcher C.F."/>
            <person name="Fukushima T."/>
            <person name="Furuno M."/>
            <person name="Futaki S."/>
            <person name="Gariboldi M."/>
            <person name="Georgii-Hemming P."/>
            <person name="Gingeras T.R."/>
            <person name="Gojobori T."/>
            <person name="Green R.E."/>
            <person name="Gustincich S."/>
            <person name="Harbers M."/>
            <person name="Hayashi Y."/>
            <person name="Hensch T.K."/>
            <person name="Hirokawa N."/>
            <person name="Hill D."/>
            <person name="Huminiecki L."/>
            <person name="Iacono M."/>
            <person name="Ikeo K."/>
            <person name="Iwama A."/>
            <person name="Ishikawa T."/>
            <person name="Jakt M."/>
            <person name="Kanapin A."/>
            <person name="Katoh M."/>
            <person name="Kawasawa Y."/>
            <person name="Kelso J."/>
            <person name="Kitamura H."/>
            <person name="Kitano H."/>
            <person name="Kollias G."/>
            <person name="Krishnan S.P."/>
            <person name="Kruger A."/>
            <person name="Kummerfeld S.K."/>
            <person name="Kurochkin I.V."/>
            <person name="Lareau L.F."/>
            <person name="Lazarevic D."/>
            <person name="Lipovich L."/>
            <person name="Liu J."/>
            <person name="Liuni S."/>
            <person name="McWilliam S."/>
            <person name="Madan Babu M."/>
            <person name="Madera M."/>
            <person name="Marchionni L."/>
            <person name="Matsuda H."/>
            <person name="Matsuzawa S."/>
            <person name="Miki H."/>
            <person name="Mignone F."/>
            <person name="Miyake S."/>
            <person name="Morris K."/>
            <person name="Mottagui-Tabar S."/>
            <person name="Mulder N."/>
            <person name="Nakano N."/>
            <person name="Nakauchi H."/>
            <person name="Ng P."/>
            <person name="Nilsson R."/>
            <person name="Nishiguchi S."/>
            <person name="Nishikawa S."/>
            <person name="Nori F."/>
            <person name="Ohara O."/>
            <person name="Okazaki Y."/>
            <person name="Orlando V."/>
            <person name="Pang K.C."/>
            <person name="Pavan W.J."/>
            <person name="Pavesi G."/>
            <person name="Pesole G."/>
            <person name="Petrovsky N."/>
            <person name="Piazza S."/>
            <person name="Reed J."/>
            <person name="Reid J.F."/>
            <person name="Ring B.Z."/>
            <person name="Ringwald M."/>
            <person name="Rost B."/>
            <person name="Ruan Y."/>
            <person name="Salzberg S.L."/>
            <person name="Sandelin A."/>
            <person name="Schneider C."/>
            <person name="Schoenbach C."/>
            <person name="Sekiguchi K."/>
            <person name="Semple C.A."/>
            <person name="Seno S."/>
            <person name="Sessa L."/>
            <person name="Sheng Y."/>
            <person name="Shibata Y."/>
            <person name="Shimada H."/>
            <person name="Shimada K."/>
            <person name="Silva D."/>
            <person name="Sinclair B."/>
            <person name="Sperling S."/>
            <person name="Stupka E."/>
            <person name="Sugiura K."/>
            <person name="Sultana R."/>
            <person name="Takenaka Y."/>
            <person name="Taki K."/>
            <person name="Tammoja K."/>
            <person name="Tan S.L."/>
            <person name="Tang S."/>
            <person name="Taylor M.S."/>
            <person name="Tegner J."/>
            <person name="Teichmann S.A."/>
            <person name="Ueda H.R."/>
            <person name="van Nimwegen E."/>
            <person name="Verardo R."/>
            <person name="Wei C.L."/>
            <person name="Yagi K."/>
            <person name="Yamanishi H."/>
            <person name="Zabarovsky E."/>
            <person name="Zhu S."/>
            <person name="Zimmer A."/>
            <person name="Hide W."/>
            <person name="Bult C."/>
            <person name="Grimmond S.M."/>
            <person name="Teasdale R.D."/>
            <person name="Liu E.T."/>
            <person name="Brusic V."/>
            <person name="Quackenbush J."/>
            <person name="Wahlestedt C."/>
            <person name="Mattick J.S."/>
            <person name="Hume D.A."/>
            <person name="Kai C."/>
            <person name="Sasaki D."/>
            <person name="Tomaru Y."/>
            <person name="Fukuda S."/>
            <person name="Kanamori-Katayama M."/>
            <person name="Suzuki M."/>
            <person name="Aoki J."/>
            <person name="Arakawa T."/>
            <person name="Iida J."/>
            <person name="Imamura K."/>
            <person name="Itoh M."/>
            <person name="Kato T."/>
            <person name="Kawaji H."/>
            <person name="Kawagashira N."/>
            <person name="Kawashima T."/>
            <person name="Kojima M."/>
            <person name="Kondo S."/>
            <person name="Konno H."/>
            <person name="Nakano K."/>
            <person name="Ninomiya N."/>
            <person name="Nishio T."/>
            <person name="Okada M."/>
            <person name="Plessy C."/>
            <person name="Shibata K."/>
            <person name="Shiraki T."/>
            <person name="Suzuki S."/>
            <person name="Tagami M."/>
            <person name="Waki K."/>
            <person name="Watahiki A."/>
            <person name="Okamura-Oho Y."/>
            <person name="Suzuki H."/>
            <person name="Kawai J."/>
            <person name="Hayashizaki Y."/>
        </authorList>
    </citation>
    <scope>NUCLEOTIDE SEQUENCE [LARGE SCALE MRNA] (ISOFORM 1)</scope>
    <source>
        <strain>C57BL/6J</strain>
        <tissue>Head</tissue>
        <tissue>Small intestine</tissue>
    </source>
</reference>
<reference key="2">
    <citation type="journal article" date="2009" name="PLoS Biol.">
        <title>Lineage-specific biology revealed by a finished genome assembly of the mouse.</title>
        <authorList>
            <person name="Church D.M."/>
            <person name="Goodstadt L."/>
            <person name="Hillier L.W."/>
            <person name="Zody M.C."/>
            <person name="Goldstein S."/>
            <person name="She X."/>
            <person name="Bult C.J."/>
            <person name="Agarwala R."/>
            <person name="Cherry J.L."/>
            <person name="DiCuccio M."/>
            <person name="Hlavina W."/>
            <person name="Kapustin Y."/>
            <person name="Meric P."/>
            <person name="Maglott D."/>
            <person name="Birtle Z."/>
            <person name="Marques A.C."/>
            <person name="Graves T."/>
            <person name="Zhou S."/>
            <person name="Teague B."/>
            <person name="Potamousis K."/>
            <person name="Churas C."/>
            <person name="Place M."/>
            <person name="Herschleb J."/>
            <person name="Runnheim R."/>
            <person name="Forrest D."/>
            <person name="Amos-Landgraf J."/>
            <person name="Schwartz D.C."/>
            <person name="Cheng Z."/>
            <person name="Lindblad-Toh K."/>
            <person name="Eichler E.E."/>
            <person name="Ponting C.P."/>
        </authorList>
    </citation>
    <scope>NUCLEOTIDE SEQUENCE [LARGE SCALE GENOMIC DNA]</scope>
    <source>
        <strain>C57BL/6J</strain>
    </source>
</reference>
<reference key="3">
    <citation type="journal article" date="2004" name="Genome Res.">
        <title>The status, quality, and expansion of the NIH full-length cDNA project: the Mammalian Gene Collection (MGC).</title>
        <authorList>
            <consortium name="The MGC Project Team"/>
        </authorList>
    </citation>
    <scope>NUCLEOTIDE SEQUENCE [LARGE SCALE MRNA] (ISOFORMS 1 AND 2)</scope>
    <source>
        <strain>FVB/N</strain>
        <tissue>Colon</tissue>
        <tissue>Mammary gland</tissue>
    </source>
</reference>
<reference key="4">
    <citation type="journal article" date="2010" name="Cell">
        <title>A tissue-specific atlas of mouse protein phosphorylation and expression.</title>
        <authorList>
            <person name="Huttlin E.L."/>
            <person name="Jedrychowski M.P."/>
            <person name="Elias J.E."/>
            <person name="Goswami T."/>
            <person name="Rad R."/>
            <person name="Beausoleil S.A."/>
            <person name="Villen J."/>
            <person name="Haas W."/>
            <person name="Sowa M.E."/>
            <person name="Gygi S.P."/>
        </authorList>
    </citation>
    <scope>IDENTIFICATION BY MASS SPECTROMETRY [LARGE SCALE ANALYSIS]</scope>
    <source>
        <tissue>Liver</tissue>
        <tissue>Spleen</tissue>
    </source>
</reference>
<reference key="5">
    <citation type="submission" date="2004-05" db="PDB data bank">
        <title>Solution structure of mouse hypothetical ubiquitin-like protein BAB25500.</title>
        <authorList>
            <consortium name="RIKEN structural genomics initiative (RSGI)"/>
        </authorList>
    </citation>
    <scope>STRUCTURE BY NMR OF 173-254</scope>
</reference>
<keyword id="KW-0002">3D-structure</keyword>
<keyword id="KW-0025">Alternative splicing</keyword>
<keyword id="KW-0472">Membrane</keyword>
<keyword id="KW-1185">Reference proteome</keyword>
<keyword id="KW-0812">Transmembrane</keyword>
<keyword id="KW-1133">Transmembrane helix</keyword>
<comment type="subcellular location">
    <subcellularLocation>
        <location evidence="5">Membrane</location>
        <topology evidence="5">Multi-pass membrane protein</topology>
    </subcellularLocation>
</comment>
<comment type="alternative products">
    <event type="alternative splicing"/>
    <isoform>
        <id>Q3V209-1</id>
        <name>1</name>
        <sequence type="displayed"/>
    </isoform>
    <isoform>
        <id>Q3V209-2</id>
        <name>2</name>
        <sequence type="described" ref="VSP_019705"/>
    </isoform>
</comment>
<comment type="sequence caution" evidence="5">
    <conflict type="erroneous initiation">
        <sequence resource="EMBL-CDS" id="AAH16187"/>
    </conflict>
</comment>
<comment type="sequence caution" evidence="5">
    <conflict type="frameshift">
        <sequence resource="EMBL-CDS" id="BAB25500"/>
    </conflict>
</comment>
<proteinExistence type="evidence at protein level"/>
<name>TMUB2_MOUSE</name>
<gene>
    <name type="primary">Tmub2</name>
</gene>
<sequence length="319" mass="33808">MISRLLQNNLMSVDPVSSQAMELSDVTLIEGVGNEVMVVAGVVALTLALVLAWLSTYVADSGNNQLLGTIVSAGDTSVLHLGHVDQLVNQGTPEPTEHPHPSGGNDDKAEETSDSGGDATGEPGARGEMEPSLEHLLDIQGLPKRQAGLGSSRPEAPLGLDDGSCLSPSPSLINVRLKFLNDTEELAVARPEDTVGTLKSKYFPGQESQMKLIYQGRLLQDPARTLSSLNITNNCVIHCHRSPPGAAVSGPSASLTPTTEQSSLGVNVGSLMVPVFVVLLGVVWYFRINYRQFFTGPATISLVGVTVFFSILVFGMYGR</sequence>
<organism>
    <name type="scientific">Mus musculus</name>
    <name type="common">Mouse</name>
    <dbReference type="NCBI Taxonomy" id="10090"/>
    <lineage>
        <taxon>Eukaryota</taxon>
        <taxon>Metazoa</taxon>
        <taxon>Chordata</taxon>
        <taxon>Craniata</taxon>
        <taxon>Vertebrata</taxon>
        <taxon>Euteleostomi</taxon>
        <taxon>Mammalia</taxon>
        <taxon>Eutheria</taxon>
        <taxon>Euarchontoglires</taxon>
        <taxon>Glires</taxon>
        <taxon>Rodentia</taxon>
        <taxon>Myomorpha</taxon>
        <taxon>Muroidea</taxon>
        <taxon>Muridae</taxon>
        <taxon>Murinae</taxon>
        <taxon>Mus</taxon>
        <taxon>Mus</taxon>
    </lineage>
</organism>
<evidence type="ECO:0000255" key="1"/>
<evidence type="ECO:0000255" key="2">
    <source>
        <dbReference type="PROSITE-ProRule" id="PRU00214"/>
    </source>
</evidence>
<evidence type="ECO:0000256" key="3">
    <source>
        <dbReference type="SAM" id="MobiDB-lite"/>
    </source>
</evidence>
<evidence type="ECO:0000303" key="4">
    <source>
    </source>
</evidence>
<evidence type="ECO:0000305" key="5"/>
<evidence type="ECO:0007829" key="6">
    <source>
        <dbReference type="PDB" id="1WIA"/>
    </source>
</evidence>
<protein>
    <recommendedName>
        <fullName>Transmembrane and ubiquitin-like domain-containing protein 2</fullName>
    </recommendedName>
</protein>
<dbReference type="EMBL" id="AK008158">
    <property type="protein sequence ID" value="BAB25500.1"/>
    <property type="status" value="ALT_FRAME"/>
    <property type="molecule type" value="mRNA"/>
</dbReference>
<dbReference type="EMBL" id="AK132118">
    <property type="protein sequence ID" value="BAE20990.1"/>
    <property type="molecule type" value="mRNA"/>
</dbReference>
<dbReference type="EMBL" id="AL954730">
    <property type="status" value="NOT_ANNOTATED_CDS"/>
    <property type="molecule type" value="Genomic_DNA"/>
</dbReference>
<dbReference type="EMBL" id="BC016187">
    <property type="protein sequence ID" value="AAH16187.1"/>
    <property type="status" value="ALT_INIT"/>
    <property type="molecule type" value="mRNA"/>
</dbReference>
<dbReference type="EMBL" id="BC029841">
    <property type="protein sequence ID" value="AAH29841.2"/>
    <property type="molecule type" value="mRNA"/>
</dbReference>
<dbReference type="CCDS" id="CCDS25494.1">
    <molecule id="Q3V209-1"/>
</dbReference>
<dbReference type="RefSeq" id="NP_001289434.1">
    <molecule id="Q3V209-1"/>
    <property type="nucleotide sequence ID" value="NM_001302505.2"/>
</dbReference>
<dbReference type="RefSeq" id="NP_001289435.2">
    <molecule id="Q3V209-2"/>
    <property type="nucleotide sequence ID" value="NM_001302506.2"/>
</dbReference>
<dbReference type="RefSeq" id="NP_082352.1">
    <molecule id="Q3V209-1"/>
    <property type="nucleotide sequence ID" value="NM_028076.4"/>
</dbReference>
<dbReference type="PDB" id="1WIA">
    <property type="method" value="NMR"/>
    <property type="chains" value="A=173-254"/>
</dbReference>
<dbReference type="PDBsum" id="1WIA"/>
<dbReference type="SMR" id="Q3V209"/>
<dbReference type="FunCoup" id="Q3V209">
    <property type="interactions" value="389"/>
</dbReference>
<dbReference type="STRING" id="10090.ENSMUSP00000116327"/>
<dbReference type="GlyGen" id="Q3V209">
    <property type="glycosylation" value="2 sites, 2 N-linked glycans (2 sites)"/>
</dbReference>
<dbReference type="iPTMnet" id="Q3V209"/>
<dbReference type="PhosphoSitePlus" id="Q3V209"/>
<dbReference type="PaxDb" id="10090-ENSMUSP00000116327"/>
<dbReference type="ProteomicsDB" id="259441">
    <molecule id="Q3V209-1"/>
</dbReference>
<dbReference type="ProteomicsDB" id="259442">
    <molecule id="Q3V209-2"/>
</dbReference>
<dbReference type="Pumba" id="Q3V209"/>
<dbReference type="Antibodypedia" id="29728">
    <property type="antibodies" value="76 antibodies from 16 providers"/>
</dbReference>
<dbReference type="Ensembl" id="ENSMUST00000036376.13">
    <molecule id="Q3V209-1"/>
    <property type="protein sequence ID" value="ENSMUSP00000047600.7"/>
    <property type="gene ID" value="ENSMUSG00000034757.16"/>
</dbReference>
<dbReference type="Ensembl" id="ENSMUST00000156326.2">
    <molecule id="Q3V209-1"/>
    <property type="protein sequence ID" value="ENSMUSP00000116327.2"/>
    <property type="gene ID" value="ENSMUSG00000034757.16"/>
</dbReference>
<dbReference type="GeneID" id="72053"/>
<dbReference type="KEGG" id="mmu:72053"/>
<dbReference type="UCSC" id="uc007lrb.2">
    <molecule id="Q3V209-1"/>
    <property type="organism name" value="mouse"/>
</dbReference>
<dbReference type="AGR" id="MGI:1919303"/>
<dbReference type="CTD" id="79089"/>
<dbReference type="MGI" id="MGI:1919303">
    <property type="gene designation" value="Tmub2"/>
</dbReference>
<dbReference type="VEuPathDB" id="HostDB:ENSMUSG00000034757"/>
<dbReference type="eggNOG" id="ENOG502QU8U">
    <property type="taxonomic scope" value="Eukaryota"/>
</dbReference>
<dbReference type="GeneTree" id="ENSGT00390000014069"/>
<dbReference type="HOGENOM" id="CLU_053940_0_0_1"/>
<dbReference type="InParanoid" id="Q3V209"/>
<dbReference type="OMA" id="MGNLMIP"/>
<dbReference type="OrthoDB" id="79244at9989"/>
<dbReference type="TreeFam" id="TF329265"/>
<dbReference type="BioGRID-ORCS" id="72053">
    <property type="hits" value="4 hits in 79 CRISPR screens"/>
</dbReference>
<dbReference type="ChiTaRS" id="Tmub2">
    <property type="organism name" value="mouse"/>
</dbReference>
<dbReference type="EvolutionaryTrace" id="Q3V209"/>
<dbReference type="PRO" id="PR:Q3V209"/>
<dbReference type="Proteomes" id="UP000000589">
    <property type="component" value="Chromosome 11"/>
</dbReference>
<dbReference type="RNAct" id="Q3V209">
    <property type="molecule type" value="protein"/>
</dbReference>
<dbReference type="Bgee" id="ENSMUSG00000034757">
    <property type="expression patterns" value="Expressed in granulocyte and 265 other cell types or tissues"/>
</dbReference>
<dbReference type="ExpressionAtlas" id="Q3V209">
    <property type="expression patterns" value="baseline and differential"/>
</dbReference>
<dbReference type="GO" id="GO:0016020">
    <property type="term" value="C:membrane"/>
    <property type="evidence" value="ECO:0007669"/>
    <property type="project" value="UniProtKB-SubCell"/>
</dbReference>
<dbReference type="GO" id="GO:0036503">
    <property type="term" value="P:ERAD pathway"/>
    <property type="evidence" value="ECO:0007669"/>
    <property type="project" value="InterPro"/>
</dbReference>
<dbReference type="CDD" id="cd17132">
    <property type="entry name" value="Ubl_TMUB2"/>
    <property type="match status" value="1"/>
</dbReference>
<dbReference type="Gene3D" id="3.10.20.90">
    <property type="entry name" value="Phosphatidylinositol 3-kinase Catalytic Subunit, Chain A, domain 1"/>
    <property type="match status" value="1"/>
</dbReference>
<dbReference type="InterPro" id="IPR040352">
    <property type="entry name" value="TMUB1/2"/>
</dbReference>
<dbReference type="InterPro" id="IPR000626">
    <property type="entry name" value="Ubiquitin-like_dom"/>
</dbReference>
<dbReference type="InterPro" id="IPR029071">
    <property type="entry name" value="Ubiquitin-like_domsf"/>
</dbReference>
<dbReference type="PANTHER" id="PTHR14557">
    <property type="entry name" value="PROTEIN C7ORF21"/>
    <property type="match status" value="1"/>
</dbReference>
<dbReference type="PANTHER" id="PTHR14557:SF4">
    <property type="entry name" value="TRANSMEMBRANE AND UBIQUITIN-LIKE DOMAIN-CONTAINING PROTEIN 2"/>
    <property type="match status" value="1"/>
</dbReference>
<dbReference type="Pfam" id="PF00240">
    <property type="entry name" value="ubiquitin"/>
    <property type="match status" value="1"/>
</dbReference>
<dbReference type="SMART" id="SM00213">
    <property type="entry name" value="UBQ"/>
    <property type="match status" value="1"/>
</dbReference>
<dbReference type="SUPFAM" id="SSF54236">
    <property type="entry name" value="Ubiquitin-like"/>
    <property type="match status" value="1"/>
</dbReference>
<dbReference type="PROSITE" id="PS50053">
    <property type="entry name" value="UBIQUITIN_2"/>
    <property type="match status" value="1"/>
</dbReference>
<accession>Q3V209</accession>
<accession>A2AWT1</accession>
<accession>Q8K0X0</accession>
<accession>Q91YQ0</accession>
<accession>Q9D8C5</accession>
<feature type="chain" id="PRO_0000245313" description="Transmembrane and ubiquitin-like domain-containing protein 2">
    <location>
        <begin position="1"/>
        <end position="319"/>
    </location>
</feature>
<feature type="transmembrane region" description="Helical" evidence="1">
    <location>
        <begin position="36"/>
        <end position="56"/>
    </location>
</feature>
<feature type="transmembrane region" description="Helical" evidence="1">
    <location>
        <begin position="264"/>
        <end position="284"/>
    </location>
</feature>
<feature type="transmembrane region" description="Helical" evidence="1">
    <location>
        <begin position="298"/>
        <end position="318"/>
    </location>
</feature>
<feature type="domain" description="Ubiquitin-like" evidence="2">
    <location>
        <begin position="173"/>
        <end position="246"/>
    </location>
</feature>
<feature type="region of interest" description="Disordered" evidence="3">
    <location>
        <begin position="88"/>
        <end position="128"/>
    </location>
</feature>
<feature type="region of interest" description="Disordered" evidence="3">
    <location>
        <begin position="145"/>
        <end position="165"/>
    </location>
</feature>
<feature type="compositionally biased region" description="Basic and acidic residues" evidence="3">
    <location>
        <begin position="95"/>
        <end position="111"/>
    </location>
</feature>
<feature type="splice variant" id="VSP_019705" description="In isoform 2." evidence="4">
    <location>
        <begin position="1"/>
        <end position="20"/>
    </location>
</feature>
<feature type="sequence conflict" description="In Ref. 3; AAH16187." evidence="5" ref="3">
    <original>Q</original>
    <variation>E</variation>
    <location>
        <position position="65"/>
    </location>
</feature>
<feature type="sequence conflict" description="In Ref. 3; AAH29841." evidence="5" ref="3">
    <original>L</original>
    <variation>H</variation>
    <location>
        <position position="79"/>
    </location>
</feature>
<feature type="sequence conflict" description="In Ref. 1; BAB25500." evidence="5" ref="1">
    <original>W</original>
    <variation>R</variation>
    <location>
        <position position="284"/>
    </location>
</feature>
<feature type="strand" evidence="6">
    <location>
        <begin position="173"/>
        <end position="179"/>
    </location>
</feature>
<feature type="turn" evidence="6">
    <location>
        <begin position="180"/>
        <end position="182"/>
    </location>
</feature>
<feature type="strand" evidence="6">
    <location>
        <begin position="183"/>
        <end position="189"/>
    </location>
</feature>
<feature type="strand" evidence="6">
    <location>
        <begin position="191"/>
        <end position="194"/>
    </location>
</feature>
<feature type="helix" evidence="6">
    <location>
        <begin position="195"/>
        <end position="202"/>
    </location>
</feature>
<feature type="strand" evidence="6">
    <location>
        <begin position="203"/>
        <end position="205"/>
    </location>
</feature>
<feature type="turn" evidence="6">
    <location>
        <begin position="206"/>
        <end position="209"/>
    </location>
</feature>
<feature type="strand" evidence="6">
    <location>
        <begin position="211"/>
        <end position="214"/>
    </location>
</feature>
<feature type="turn" evidence="6">
    <location>
        <begin position="226"/>
        <end position="230"/>
    </location>
</feature>
<feature type="strand" evidence="6">
    <location>
        <begin position="235"/>
        <end position="240"/>
    </location>
</feature>